<protein>
    <recommendedName>
        <fullName evidence="1">Phosphoheptose isomerase</fullName>
        <ecNumber evidence="1">5.3.1.28</ecNumber>
    </recommendedName>
    <alternativeName>
        <fullName evidence="1">Sedoheptulose 7-phosphate isomerase</fullName>
    </alternativeName>
</protein>
<feature type="chain" id="PRO_1000197016" description="Phosphoheptose isomerase">
    <location>
        <begin position="1"/>
        <end position="197"/>
    </location>
</feature>
<feature type="domain" description="SIS" evidence="1">
    <location>
        <begin position="34"/>
        <end position="196"/>
    </location>
</feature>
<feature type="binding site" evidence="1">
    <location>
        <begin position="49"/>
        <end position="51"/>
    </location>
    <ligand>
        <name>substrate</name>
    </ligand>
</feature>
<feature type="binding site" evidence="1">
    <location>
        <position position="58"/>
    </location>
    <ligand>
        <name>Zn(2+)</name>
        <dbReference type="ChEBI" id="CHEBI:29105"/>
    </ligand>
</feature>
<feature type="binding site" evidence="1">
    <location>
        <position position="62"/>
    </location>
    <ligand>
        <name>substrate</name>
    </ligand>
</feature>
<feature type="binding site" evidence="1">
    <location>
        <position position="62"/>
    </location>
    <ligand>
        <name>Zn(2+)</name>
        <dbReference type="ChEBI" id="CHEBI:29105"/>
    </ligand>
</feature>
<feature type="binding site" evidence="1">
    <location>
        <begin position="91"/>
        <end position="92"/>
    </location>
    <ligand>
        <name>substrate</name>
    </ligand>
</feature>
<feature type="binding site" evidence="1">
    <location>
        <begin position="117"/>
        <end position="119"/>
    </location>
    <ligand>
        <name>substrate</name>
    </ligand>
</feature>
<feature type="binding site" evidence="1">
    <location>
        <position position="122"/>
    </location>
    <ligand>
        <name>substrate</name>
    </ligand>
</feature>
<feature type="binding site" evidence="1">
    <location>
        <position position="172"/>
    </location>
    <ligand>
        <name>substrate</name>
    </ligand>
</feature>
<feature type="binding site" evidence="1">
    <location>
        <position position="172"/>
    </location>
    <ligand>
        <name>Zn(2+)</name>
        <dbReference type="ChEBI" id="CHEBI:29105"/>
    </ligand>
</feature>
<feature type="binding site" evidence="1">
    <location>
        <position position="180"/>
    </location>
    <ligand>
        <name>Zn(2+)</name>
        <dbReference type="ChEBI" id="CHEBI:29105"/>
    </ligand>
</feature>
<keyword id="KW-0119">Carbohydrate metabolism</keyword>
<keyword id="KW-0963">Cytoplasm</keyword>
<keyword id="KW-0413">Isomerase</keyword>
<keyword id="KW-0479">Metal-binding</keyword>
<keyword id="KW-0862">Zinc</keyword>
<proteinExistence type="inferred from homology"/>
<comment type="function">
    <text evidence="1">Catalyzes the isomerization of sedoheptulose 7-phosphate in D-glycero-D-manno-heptose 7-phosphate.</text>
</comment>
<comment type="catalytic activity">
    <reaction evidence="1">
        <text>2 D-sedoheptulose 7-phosphate = D-glycero-alpha-D-manno-heptose 7-phosphate + D-glycero-beta-D-manno-heptose 7-phosphate</text>
        <dbReference type="Rhea" id="RHEA:27489"/>
        <dbReference type="ChEBI" id="CHEBI:57483"/>
        <dbReference type="ChEBI" id="CHEBI:60203"/>
        <dbReference type="ChEBI" id="CHEBI:60204"/>
        <dbReference type="EC" id="5.3.1.28"/>
    </reaction>
</comment>
<comment type="cofactor">
    <cofactor evidence="1">
        <name>Zn(2+)</name>
        <dbReference type="ChEBI" id="CHEBI:29105"/>
    </cofactor>
    <text evidence="1">Binds 1 zinc ion per subunit.</text>
</comment>
<comment type="pathway">
    <text evidence="1">Carbohydrate biosynthesis; D-glycero-D-manno-heptose 7-phosphate biosynthesis; D-glycero-alpha-D-manno-heptose 7-phosphate and D-glycero-beta-D-manno-heptose 7-phosphate from sedoheptulose 7-phosphate: step 1/1.</text>
</comment>
<comment type="subunit">
    <text evidence="1">Homotetramer.</text>
</comment>
<comment type="subcellular location">
    <subcellularLocation>
        <location evidence="1">Cytoplasm</location>
    </subcellularLocation>
</comment>
<comment type="miscellaneous">
    <text evidence="1">The reaction produces a racemic mixture of D-glycero-alpha-D-manno-heptose 7-phosphate and D-glycero-beta-D-manno-heptose 7-phosphate.</text>
</comment>
<comment type="similarity">
    <text evidence="1">Belongs to the SIS family. GmhA subfamily.</text>
</comment>
<sequence>MLERIKDSFTESIQTKIDAAEALPESIAKAAEMMVHCLLGGNKILACGNGGSAGDAQHFSAELLNRYEIERPPLPAIALSTDTSTITAIANDYSYDEIFSKQIFALGQPGDILLAISTSGNSGNVIKAMEAALSRDMTIVALTGKDGGAMAGLLSVGDVEIRVPSNVTARIQEVHLLVIHCLCDNIDRTLFPQDEQQ</sequence>
<organism>
    <name type="scientific">Shewanella baltica (strain OS223)</name>
    <dbReference type="NCBI Taxonomy" id="407976"/>
    <lineage>
        <taxon>Bacteria</taxon>
        <taxon>Pseudomonadati</taxon>
        <taxon>Pseudomonadota</taxon>
        <taxon>Gammaproteobacteria</taxon>
        <taxon>Alteromonadales</taxon>
        <taxon>Shewanellaceae</taxon>
        <taxon>Shewanella</taxon>
    </lineage>
</organism>
<dbReference type="EC" id="5.3.1.28" evidence="1"/>
<dbReference type="EMBL" id="CP001252">
    <property type="protein sequence ID" value="ACK48464.1"/>
    <property type="molecule type" value="Genomic_DNA"/>
</dbReference>
<dbReference type="RefSeq" id="WP_006083530.1">
    <property type="nucleotide sequence ID" value="NC_011663.1"/>
</dbReference>
<dbReference type="SMR" id="B8EBE0"/>
<dbReference type="KEGG" id="sbp:Sbal223_3991"/>
<dbReference type="HOGENOM" id="CLU_080999_4_0_6"/>
<dbReference type="UniPathway" id="UPA00041">
    <property type="reaction ID" value="UER00436"/>
</dbReference>
<dbReference type="Proteomes" id="UP000002507">
    <property type="component" value="Chromosome"/>
</dbReference>
<dbReference type="GO" id="GO:0005737">
    <property type="term" value="C:cytoplasm"/>
    <property type="evidence" value="ECO:0007669"/>
    <property type="project" value="UniProtKB-SubCell"/>
</dbReference>
<dbReference type="GO" id="GO:0097367">
    <property type="term" value="F:carbohydrate derivative binding"/>
    <property type="evidence" value="ECO:0007669"/>
    <property type="project" value="InterPro"/>
</dbReference>
<dbReference type="GO" id="GO:0008968">
    <property type="term" value="F:D-sedoheptulose 7-phosphate isomerase activity"/>
    <property type="evidence" value="ECO:0007669"/>
    <property type="project" value="UniProtKB-UniRule"/>
</dbReference>
<dbReference type="GO" id="GO:0008270">
    <property type="term" value="F:zinc ion binding"/>
    <property type="evidence" value="ECO:0007669"/>
    <property type="project" value="UniProtKB-UniRule"/>
</dbReference>
<dbReference type="GO" id="GO:0005975">
    <property type="term" value="P:carbohydrate metabolic process"/>
    <property type="evidence" value="ECO:0007669"/>
    <property type="project" value="UniProtKB-UniRule"/>
</dbReference>
<dbReference type="GO" id="GO:2001061">
    <property type="term" value="P:D-glycero-D-manno-heptose 7-phosphate biosynthetic process"/>
    <property type="evidence" value="ECO:0007669"/>
    <property type="project" value="UniProtKB-UniPathway"/>
</dbReference>
<dbReference type="CDD" id="cd05006">
    <property type="entry name" value="SIS_GmhA"/>
    <property type="match status" value="1"/>
</dbReference>
<dbReference type="Gene3D" id="3.40.50.10490">
    <property type="entry name" value="Glucose-6-phosphate isomerase like protein, domain 1"/>
    <property type="match status" value="1"/>
</dbReference>
<dbReference type="HAMAP" id="MF_00067">
    <property type="entry name" value="GmhA"/>
    <property type="match status" value="1"/>
</dbReference>
<dbReference type="InterPro" id="IPR035461">
    <property type="entry name" value="GmhA/DiaA"/>
</dbReference>
<dbReference type="InterPro" id="IPR004515">
    <property type="entry name" value="Phosphoheptose_Isoase"/>
</dbReference>
<dbReference type="InterPro" id="IPR001347">
    <property type="entry name" value="SIS_dom"/>
</dbReference>
<dbReference type="InterPro" id="IPR046348">
    <property type="entry name" value="SIS_dom_sf"/>
</dbReference>
<dbReference type="InterPro" id="IPR050099">
    <property type="entry name" value="SIS_GmhA/DiaA_subfam"/>
</dbReference>
<dbReference type="NCBIfam" id="NF010546">
    <property type="entry name" value="PRK13936.1"/>
    <property type="match status" value="1"/>
</dbReference>
<dbReference type="PANTHER" id="PTHR30390:SF6">
    <property type="entry name" value="DNAA INITIATOR-ASSOCIATING PROTEIN DIAA"/>
    <property type="match status" value="1"/>
</dbReference>
<dbReference type="PANTHER" id="PTHR30390">
    <property type="entry name" value="SEDOHEPTULOSE 7-PHOSPHATE ISOMERASE / DNAA INITIATOR-ASSOCIATING FACTOR FOR REPLICATION INITIATION"/>
    <property type="match status" value="1"/>
</dbReference>
<dbReference type="Pfam" id="PF13580">
    <property type="entry name" value="SIS_2"/>
    <property type="match status" value="1"/>
</dbReference>
<dbReference type="SUPFAM" id="SSF53697">
    <property type="entry name" value="SIS domain"/>
    <property type="match status" value="1"/>
</dbReference>
<dbReference type="PROSITE" id="PS51464">
    <property type="entry name" value="SIS"/>
    <property type="match status" value="1"/>
</dbReference>
<evidence type="ECO:0000255" key="1">
    <source>
        <dbReference type="HAMAP-Rule" id="MF_00067"/>
    </source>
</evidence>
<gene>
    <name evidence="1" type="primary">gmhA</name>
    <name type="ordered locus">Sbal223_3991</name>
</gene>
<name>GMHA_SHEB2</name>
<accession>B8EBE0</accession>
<reference key="1">
    <citation type="submission" date="2008-12" db="EMBL/GenBank/DDBJ databases">
        <title>Complete sequence of chromosome of Shewanella baltica OS223.</title>
        <authorList>
            <consortium name="US DOE Joint Genome Institute"/>
            <person name="Lucas S."/>
            <person name="Copeland A."/>
            <person name="Lapidus A."/>
            <person name="Glavina del Rio T."/>
            <person name="Dalin E."/>
            <person name="Tice H."/>
            <person name="Bruce D."/>
            <person name="Goodwin L."/>
            <person name="Pitluck S."/>
            <person name="Chertkov O."/>
            <person name="Meincke L."/>
            <person name="Brettin T."/>
            <person name="Detter J.C."/>
            <person name="Han C."/>
            <person name="Kuske C.R."/>
            <person name="Larimer F."/>
            <person name="Land M."/>
            <person name="Hauser L."/>
            <person name="Kyrpides N."/>
            <person name="Ovchinnikova G."/>
            <person name="Brettar I."/>
            <person name="Rodrigues J."/>
            <person name="Konstantinidis K."/>
            <person name="Tiedje J."/>
        </authorList>
    </citation>
    <scope>NUCLEOTIDE SEQUENCE [LARGE SCALE GENOMIC DNA]</scope>
    <source>
        <strain>OS223</strain>
    </source>
</reference>